<gene>
    <name evidence="21" type="primary">Tiam2</name>
    <name type="synonym">Kiaa2016</name>
    <name evidence="15 16" type="synonym">Stef</name>
</gene>
<protein>
    <recommendedName>
        <fullName evidence="20">Rho guanine nucleotide exchange factor TIAM2</fullName>
    </recommendedName>
    <alternativeName>
        <fullName>SIF and TIAM1-like exchange factor</fullName>
    </alternativeName>
    <alternativeName>
        <fullName evidence="19">T-lymphoma invasion and metastasis-inducing protein 2</fullName>
        <shortName>TIAM-2</shortName>
    </alternativeName>
</protein>
<name>TIAM2_MOUSE</name>
<evidence type="ECO:0000255" key="1"/>
<evidence type="ECO:0000255" key="2">
    <source>
        <dbReference type="PROSITE-ProRule" id="PRU00062"/>
    </source>
</evidence>
<evidence type="ECO:0000255" key="3">
    <source>
        <dbReference type="PROSITE-ProRule" id="PRU00143"/>
    </source>
</evidence>
<evidence type="ECO:0000255" key="4">
    <source>
        <dbReference type="PROSITE-ProRule" id="PRU00145"/>
    </source>
</evidence>
<evidence type="ECO:0000255" key="5">
    <source>
        <dbReference type="PROSITE-ProRule" id="PRU00262"/>
    </source>
</evidence>
<evidence type="ECO:0000256" key="6">
    <source>
        <dbReference type="SAM" id="MobiDB-lite"/>
    </source>
</evidence>
<evidence type="ECO:0000269" key="7">
    <source>
    </source>
</evidence>
<evidence type="ECO:0000269" key="8">
    <source>
    </source>
</evidence>
<evidence type="ECO:0000269" key="9">
    <source>
    </source>
</evidence>
<evidence type="ECO:0000269" key="10">
    <source>
    </source>
</evidence>
<evidence type="ECO:0000269" key="11">
    <source>
    </source>
</evidence>
<evidence type="ECO:0000269" key="12">
    <source>
    </source>
</evidence>
<evidence type="ECO:0000269" key="13">
    <source>
    </source>
</evidence>
<evidence type="ECO:0000269" key="14">
    <source>
    </source>
</evidence>
<evidence type="ECO:0000303" key="15">
    <source>
    </source>
</evidence>
<evidence type="ECO:0000303" key="16">
    <source>
    </source>
</evidence>
<evidence type="ECO:0000303" key="17">
    <source>
    </source>
</evidence>
<evidence type="ECO:0000303" key="18">
    <source>
    </source>
</evidence>
<evidence type="ECO:0000305" key="19"/>
<evidence type="ECO:0000305" key="20">
    <source>
    </source>
</evidence>
<evidence type="ECO:0000312" key="21">
    <source>
        <dbReference type="MGI" id="MGI:1344338"/>
    </source>
</evidence>
<evidence type="ECO:0007744" key="22">
    <source>
    </source>
</evidence>
<evidence type="ECO:0007829" key="23">
    <source>
        <dbReference type="PDB" id="3A8P"/>
    </source>
</evidence>
<organism>
    <name type="scientific">Mus musculus</name>
    <name type="common">Mouse</name>
    <dbReference type="NCBI Taxonomy" id="10090"/>
    <lineage>
        <taxon>Eukaryota</taxon>
        <taxon>Metazoa</taxon>
        <taxon>Chordata</taxon>
        <taxon>Craniata</taxon>
        <taxon>Vertebrata</taxon>
        <taxon>Euteleostomi</taxon>
        <taxon>Mammalia</taxon>
        <taxon>Eutheria</taxon>
        <taxon>Euarchontoglires</taxon>
        <taxon>Glires</taxon>
        <taxon>Rodentia</taxon>
        <taxon>Myomorpha</taxon>
        <taxon>Muroidea</taxon>
        <taxon>Muridae</taxon>
        <taxon>Murinae</taxon>
        <taxon>Mus</taxon>
        <taxon>Mus</taxon>
    </lineage>
</organism>
<sequence length="1715" mass="192567">MGNSESQYTFQGSKNHSNTVTGAKQKPCSLKIRSVHAKDEKSLHGWTHGSSGAGYKSRSLARSCLSHFKNHQPYATRLSGPTCKVSKGTTYSKHRANTPGNDFQGNSGAFLPENGFHYVDRESEESHITSNGHLLTCYGRKESLASTPPGEDHRSPRVLIKTLGKLDGCLRVEFHNGGNPHKGTSEDPSGPVRLLRYSPTLASETCPVRETRRHSAAGSPSSQRPSPTDSRLRSSKGSSLSSESSWYDSPWGNAGEVSEVEGSFLAPSTPDPSLPSSFPPSDTKKPFNQSSSLSSLRELYKDPNLGCRSPSGTCLSSNEYISSQVSLNNRVSFASDMDVPSRVDHRDPLHYSSFTLPCRKSKALTEDAAKKDTLKARMRRFSDWTGSLSRKKRKLQEPRSMEGSEYFDSHSDGLNAEGQVPAQTSSLLWSGGSAQTLPHRSESTHAISVDPLRQNIYENFMRELEMSRSNTEHVETSTETMESSSESVSSLEQLDLLFEKEQGVVRKAGWLFFKPLVTLQKERKLELVARRKWKQYWVTLKGCTLLFYETYGKNSTEQNSAPRCALFAEDSIVQSVPEHPKKEHVFCLSNSCGDVYLFQATSQTDLENWVTAIHSACASLFAKKHGKEDTVRLLKSQTRSLLQKIDMDSKMKKMAELQLSVVSDPKNRKAIENQIRQWEQNLEKFHMDLFRMRCYLASLQGGELPNPKSLLAATSRPSKLALGRLGVLSVSSFHALVCSRDDSTLRKRTLSLTQRGKSKKGIFSSLKGLDTLARKGREKRASITQMFDSSHSHGFLGTQLPQKSTNSNKAHDLHLYGSAVDSALRDSMWEVQTYVHFQDNEGVTVTIKPEHRVEDVLALVCKMRQLEPTHYGLQLRKVVDKSVEWCVPALYEYMQEQVYDEIEVFPLSVYDVQLTKTGDMTDFGFAVTVQVDEHQHLNRIFISDVLPDSLAYGGGLRKGNEITSLNGEPVSDLDIQQMEALFSEKSVGLTLVARPVTTRRTLCASWSDSDLFSRDQKSLPPSPNQSQLLEEFLDNFRKTATSDFSNVPEITTGLKRSQTEGTLDQVPHREKMEQTFLSADQIAELCRDLNNTHTNSMEAPTESHDPPPRPLARHLSDADRLRKVIQELVDTEKSYVKDLSCLFELYLEPLQNETFLTQDEMESLFGSLPEMLEFQKVFLETLEDAISASSDFSVLETPSQFRKLLFSLGGSFLYYADHFKLYSGFCANHIKVQRVLERAKTDKAFKAFLDARNPTKQHSSTLESYLIKPVQRVLKYPLLLKELVSLTDHESEEHYHLTEALKAMEKVASHINEMQKIYEDYGMVFDQLVAEQSGTEKEVTELSMGELLMHSTVSWLNPFLSLGKARKDIELTVFVFKRAVILVYKENCKLKKKLPSNSRPAHNSADLDPFKFRWLIPISALQVRLGNTAGTENNSTWELIHTKSEIEGRPETIFQLCCSDSENKTSIVKVIRSILRENFRRHIKCELPLEKTCKDRLVPLKNRVPVSAKLASSRSLKGLRTSSSSEWPSEPSKGNSLDSDECSLSSGTQSSGCPVAESRRDSKSTELEKDAQEGLAEFPDGLIKESDILSDEDEDFHHPLKQGSPTKDIEIQFQRLKISEESDVHPVGQQPLTESGEQPKLVRGHFCPIKRKANSTKRGRGTLLKAQTRHQSLDSHPETASIDLNLVLEREFSVQSLTSVVNEEGFYETQSHGKS</sequence>
<dbReference type="EMBL" id="AB022915">
    <property type="protein sequence ID" value="BAA81823.1"/>
    <property type="molecule type" value="mRNA"/>
</dbReference>
<dbReference type="EMBL" id="AK129474">
    <property type="protein sequence ID" value="BAC98284.1"/>
    <property type="status" value="ALT_INIT"/>
    <property type="molecule type" value="mRNA"/>
</dbReference>
<dbReference type="EMBL" id="AK158137">
    <property type="protein sequence ID" value="BAE34377.1"/>
    <property type="molecule type" value="mRNA"/>
</dbReference>
<dbReference type="EMBL" id="AK161947">
    <property type="protein sequence ID" value="BAE36649.1"/>
    <property type="molecule type" value="mRNA"/>
</dbReference>
<dbReference type="EMBL" id="BC067048">
    <property type="protein sequence ID" value="AAH67048.1"/>
    <property type="molecule type" value="mRNA"/>
</dbReference>
<dbReference type="EMBL" id="BC079600">
    <property type="protein sequence ID" value="AAH79600.1"/>
    <property type="molecule type" value="mRNA"/>
</dbReference>
<dbReference type="EMBL" id="AF121102">
    <property type="protein sequence ID" value="AAF28865.1"/>
    <property type="molecule type" value="mRNA"/>
</dbReference>
<dbReference type="CCDS" id="CCDS37421.1">
    <molecule id="Q6ZPF3-1"/>
</dbReference>
<dbReference type="RefSeq" id="NP_001116470.1">
    <molecule id="Q6ZPF3-1"/>
    <property type="nucleotide sequence ID" value="NM_001122998.1"/>
</dbReference>
<dbReference type="RefSeq" id="NP_001273686.1">
    <molecule id="Q6ZPF3-3"/>
    <property type="nucleotide sequence ID" value="NM_001286757.1"/>
</dbReference>
<dbReference type="RefSeq" id="NP_001273687.1">
    <property type="nucleotide sequence ID" value="NM_001286758.1"/>
</dbReference>
<dbReference type="RefSeq" id="NP_036008.2">
    <molecule id="Q6ZPF3-1"/>
    <property type="nucleotide sequence ID" value="NM_011878.2"/>
</dbReference>
<dbReference type="RefSeq" id="XP_006523288.1">
    <molecule id="Q6ZPF3-1"/>
    <property type="nucleotide sequence ID" value="XM_006523225.5"/>
</dbReference>
<dbReference type="RefSeq" id="XP_006523289.1">
    <molecule id="Q6ZPF3-1"/>
    <property type="nucleotide sequence ID" value="XM_006523226.1"/>
</dbReference>
<dbReference type="RefSeq" id="XP_006523296.1">
    <molecule id="Q6ZPF3-3"/>
    <property type="nucleotide sequence ID" value="XM_006523233.3"/>
</dbReference>
<dbReference type="RefSeq" id="XP_030105627.1">
    <molecule id="Q6ZPF3-1"/>
    <property type="nucleotide sequence ID" value="XM_030249767.2"/>
</dbReference>
<dbReference type="RefSeq" id="XP_036016479.1">
    <molecule id="Q6ZPF3-3"/>
    <property type="nucleotide sequence ID" value="XM_036160586.1"/>
</dbReference>
<dbReference type="PDB" id="3A8P">
    <property type="method" value="X-ray"/>
    <property type="resolution" value="2.10 A"/>
    <property type="chains" value="A/B/C/D=500-757"/>
</dbReference>
<dbReference type="PDB" id="3A8Q">
    <property type="method" value="X-ray"/>
    <property type="resolution" value="3.20 A"/>
    <property type="chains" value="A/B/C/D=500-757"/>
</dbReference>
<dbReference type="PDBsum" id="3A8P"/>
<dbReference type="PDBsum" id="3A8Q"/>
<dbReference type="SMR" id="Q6ZPF3"/>
<dbReference type="BioGRID" id="204849">
    <property type="interactions" value="19"/>
</dbReference>
<dbReference type="FunCoup" id="Q6ZPF3">
    <property type="interactions" value="726"/>
</dbReference>
<dbReference type="IntAct" id="Q6ZPF3">
    <property type="interactions" value="8"/>
</dbReference>
<dbReference type="MINT" id="Q6ZPF3"/>
<dbReference type="STRING" id="10090.ENSMUSP00000072020"/>
<dbReference type="GlyGen" id="Q6ZPF3">
    <property type="glycosylation" value="6 sites, 3 N-linked glycans (3 sites), 1 O-linked glycan (2 sites)"/>
</dbReference>
<dbReference type="iPTMnet" id="Q6ZPF3"/>
<dbReference type="PhosphoSitePlus" id="Q6ZPF3"/>
<dbReference type="PaxDb" id="10090-ENSMUSP00000125842"/>
<dbReference type="PeptideAtlas" id="Q6ZPF3"/>
<dbReference type="ProteomicsDB" id="258879">
    <molecule id="Q6ZPF3-1"/>
</dbReference>
<dbReference type="ProteomicsDB" id="258880">
    <molecule id="Q6ZPF3-2"/>
</dbReference>
<dbReference type="ProteomicsDB" id="258881">
    <molecule id="Q6ZPF3-3"/>
</dbReference>
<dbReference type="ProteomicsDB" id="258882">
    <molecule id="Q6ZPF3-4"/>
</dbReference>
<dbReference type="Pumba" id="Q6ZPF3"/>
<dbReference type="Antibodypedia" id="2773">
    <property type="antibodies" value="177 antibodies from 24 providers"/>
</dbReference>
<dbReference type="DNASU" id="24001"/>
<dbReference type="Ensembl" id="ENSMUST00000072156.7">
    <molecule id="Q6ZPF3-1"/>
    <property type="protein sequence ID" value="ENSMUSP00000072020.7"/>
    <property type="gene ID" value="ENSMUSG00000023800.16"/>
</dbReference>
<dbReference type="Ensembl" id="ENSMUST00000169838.9">
    <molecule id="Q6ZPF3-1"/>
    <property type="protein sequence ID" value="ENSMUSP00000125842.2"/>
    <property type="gene ID" value="ENSMUSG00000023800.16"/>
</dbReference>
<dbReference type="GeneID" id="24001"/>
<dbReference type="KEGG" id="mmu:24001"/>
<dbReference type="UCSC" id="uc008aeo.1">
    <molecule id="Q6ZPF3-1"/>
    <property type="organism name" value="mouse"/>
</dbReference>
<dbReference type="UCSC" id="uc008aep.1">
    <molecule id="Q6ZPF3-4"/>
    <property type="organism name" value="mouse"/>
</dbReference>
<dbReference type="UCSC" id="uc008aer.1">
    <molecule id="Q6ZPF3-3"/>
    <property type="organism name" value="mouse"/>
</dbReference>
<dbReference type="AGR" id="MGI:1344338"/>
<dbReference type="CTD" id="26230"/>
<dbReference type="MGI" id="MGI:1344338">
    <property type="gene designation" value="Tiam2"/>
</dbReference>
<dbReference type="VEuPathDB" id="HostDB:ENSMUSG00000023800"/>
<dbReference type="eggNOG" id="KOG3519">
    <property type="taxonomic scope" value="Eukaryota"/>
</dbReference>
<dbReference type="GeneTree" id="ENSGT00940000157012"/>
<dbReference type="HOGENOM" id="CLU_000494_3_1_1"/>
<dbReference type="InParanoid" id="Q6ZPF3"/>
<dbReference type="OMA" id="KSHQPYA"/>
<dbReference type="OrthoDB" id="8059989at2759"/>
<dbReference type="PhylomeDB" id="Q6ZPF3"/>
<dbReference type="TreeFam" id="TF319686"/>
<dbReference type="Reactome" id="R-MMU-193648">
    <property type="pathway name" value="NRAGE signals death through JNK"/>
</dbReference>
<dbReference type="Reactome" id="R-MMU-416482">
    <property type="pathway name" value="G alpha (12/13) signalling events"/>
</dbReference>
<dbReference type="Reactome" id="R-MMU-9013149">
    <property type="pathway name" value="RAC1 GTPase cycle"/>
</dbReference>
<dbReference type="BioGRID-ORCS" id="24001">
    <property type="hits" value="4 hits in 76 CRISPR screens"/>
</dbReference>
<dbReference type="ChiTaRS" id="Tiam2">
    <property type="organism name" value="mouse"/>
</dbReference>
<dbReference type="EvolutionaryTrace" id="Q6ZPF3"/>
<dbReference type="PRO" id="PR:Q6ZPF3"/>
<dbReference type="Proteomes" id="UP000000589">
    <property type="component" value="Chromosome 17"/>
</dbReference>
<dbReference type="RNAct" id="Q6ZPF3">
    <property type="molecule type" value="protein"/>
</dbReference>
<dbReference type="Bgee" id="ENSMUSG00000023800">
    <property type="expression patterns" value="Expressed in cortical plate and 164 other cell types or tissues"/>
</dbReference>
<dbReference type="ExpressionAtlas" id="Q6ZPF3">
    <property type="expression patterns" value="baseline and differential"/>
</dbReference>
<dbReference type="GO" id="GO:0005737">
    <property type="term" value="C:cytoplasm"/>
    <property type="evidence" value="ECO:0000314"/>
    <property type="project" value="MGI"/>
</dbReference>
<dbReference type="GO" id="GO:0030175">
    <property type="term" value="C:filopodium"/>
    <property type="evidence" value="ECO:0007669"/>
    <property type="project" value="UniProtKB-SubCell"/>
</dbReference>
<dbReference type="GO" id="GO:0030426">
    <property type="term" value="C:growth cone"/>
    <property type="evidence" value="ECO:0007669"/>
    <property type="project" value="UniProtKB-SubCell"/>
</dbReference>
<dbReference type="GO" id="GO:0030027">
    <property type="term" value="C:lamellipodium"/>
    <property type="evidence" value="ECO:0007669"/>
    <property type="project" value="UniProtKB-SubCell"/>
</dbReference>
<dbReference type="GO" id="GO:0016020">
    <property type="term" value="C:membrane"/>
    <property type="evidence" value="ECO:0000314"/>
    <property type="project" value="MGI"/>
</dbReference>
<dbReference type="GO" id="GO:0043204">
    <property type="term" value="C:perikaryon"/>
    <property type="evidence" value="ECO:0007669"/>
    <property type="project" value="UniProtKB-SubCell"/>
</dbReference>
<dbReference type="GO" id="GO:0005096">
    <property type="term" value="F:GTPase activator activity"/>
    <property type="evidence" value="ECO:0000314"/>
    <property type="project" value="MGI"/>
</dbReference>
<dbReference type="GO" id="GO:0005085">
    <property type="term" value="F:guanyl-nucleotide exchange factor activity"/>
    <property type="evidence" value="ECO:0000314"/>
    <property type="project" value="MGI"/>
</dbReference>
<dbReference type="GO" id="GO:0007264">
    <property type="term" value="P:small GTPase-mediated signal transduction"/>
    <property type="evidence" value="ECO:0007669"/>
    <property type="project" value="InterPro"/>
</dbReference>
<dbReference type="CDD" id="cd00136">
    <property type="entry name" value="PDZ_canonical"/>
    <property type="match status" value="1"/>
</dbReference>
<dbReference type="CDD" id="cd01230">
    <property type="entry name" value="PH1_Tiam1_2"/>
    <property type="match status" value="1"/>
</dbReference>
<dbReference type="CDD" id="cd01255">
    <property type="entry name" value="PH2_Tiam1_2"/>
    <property type="match status" value="1"/>
</dbReference>
<dbReference type="CDD" id="cd00160">
    <property type="entry name" value="RhoGEF"/>
    <property type="match status" value="1"/>
</dbReference>
<dbReference type="FunFam" id="1.20.900.10:FF:000012">
    <property type="entry name" value="T cell lymphoma invasion and metastasis 1"/>
    <property type="match status" value="1"/>
</dbReference>
<dbReference type="FunFam" id="2.30.29.30:FF:000065">
    <property type="entry name" value="T cell lymphoma invasion and metastasis 1"/>
    <property type="match status" value="1"/>
</dbReference>
<dbReference type="FunFam" id="2.30.29.30:FF:000121">
    <property type="entry name" value="T cell lymphoma invasion and metastasis 1"/>
    <property type="match status" value="1"/>
</dbReference>
<dbReference type="Gene3D" id="2.30.42.10">
    <property type="match status" value="1"/>
</dbReference>
<dbReference type="Gene3D" id="6.10.140.680">
    <property type="match status" value="1"/>
</dbReference>
<dbReference type="Gene3D" id="1.20.900.10">
    <property type="entry name" value="Dbl homology (DH) domain"/>
    <property type="match status" value="1"/>
</dbReference>
<dbReference type="Gene3D" id="2.30.29.30">
    <property type="entry name" value="Pleckstrin-homology domain (PH domain)/Phosphotyrosine-binding domain (PTB)"/>
    <property type="match status" value="2"/>
</dbReference>
<dbReference type="InterPro" id="IPR035899">
    <property type="entry name" value="DBL_dom_sf"/>
</dbReference>
<dbReference type="InterPro" id="IPR000219">
    <property type="entry name" value="DH_dom"/>
</dbReference>
<dbReference type="InterPro" id="IPR001331">
    <property type="entry name" value="GDS_CDC24_CS"/>
</dbReference>
<dbReference type="InterPro" id="IPR001478">
    <property type="entry name" value="PDZ"/>
</dbReference>
<dbReference type="InterPro" id="IPR036034">
    <property type="entry name" value="PDZ_sf"/>
</dbReference>
<dbReference type="InterPro" id="IPR011993">
    <property type="entry name" value="PH-like_dom_sf"/>
</dbReference>
<dbReference type="InterPro" id="IPR001849">
    <property type="entry name" value="PH_domain"/>
</dbReference>
<dbReference type="InterPro" id="IPR055230">
    <property type="entry name" value="PH_Tiam1/2"/>
</dbReference>
<dbReference type="InterPro" id="IPR003116">
    <property type="entry name" value="RBD_dom"/>
</dbReference>
<dbReference type="InterPro" id="IPR043537">
    <property type="entry name" value="Tiam1/Tiam2/Sif"/>
</dbReference>
<dbReference type="InterPro" id="IPR040655">
    <property type="entry name" value="TIAM1_CC-Ex"/>
</dbReference>
<dbReference type="PANTHER" id="PTHR46001:SF5">
    <property type="entry name" value="RHO GUANINE NUCLEOTIDE EXCHANGE FACTOR TIAM2"/>
    <property type="match status" value="1"/>
</dbReference>
<dbReference type="PANTHER" id="PTHR46001">
    <property type="entry name" value="TIAM (MAMMALIAN TUMOR INVASION AND METASTASIS FACTOR) HOMOLOG"/>
    <property type="match status" value="1"/>
</dbReference>
<dbReference type="Pfam" id="PF00595">
    <property type="entry name" value="PDZ"/>
    <property type="match status" value="1"/>
</dbReference>
<dbReference type="Pfam" id="PF00169">
    <property type="entry name" value="PH"/>
    <property type="match status" value="1"/>
</dbReference>
<dbReference type="Pfam" id="PF23014">
    <property type="entry name" value="PH_Tiam1"/>
    <property type="match status" value="1"/>
</dbReference>
<dbReference type="Pfam" id="PF00621">
    <property type="entry name" value="RhoGEF"/>
    <property type="match status" value="1"/>
</dbReference>
<dbReference type="Pfam" id="PF18385">
    <property type="entry name" value="Tiam_CC_Ex"/>
    <property type="match status" value="1"/>
</dbReference>
<dbReference type="SMART" id="SM00228">
    <property type="entry name" value="PDZ"/>
    <property type="match status" value="1"/>
</dbReference>
<dbReference type="SMART" id="SM00233">
    <property type="entry name" value="PH"/>
    <property type="match status" value="2"/>
</dbReference>
<dbReference type="SMART" id="SM00455">
    <property type="entry name" value="RBD"/>
    <property type="match status" value="1"/>
</dbReference>
<dbReference type="SMART" id="SM00325">
    <property type="entry name" value="RhoGEF"/>
    <property type="match status" value="1"/>
</dbReference>
<dbReference type="SUPFAM" id="SSF48065">
    <property type="entry name" value="DBL homology domain (DH-domain)"/>
    <property type="match status" value="1"/>
</dbReference>
<dbReference type="SUPFAM" id="SSF50156">
    <property type="entry name" value="PDZ domain-like"/>
    <property type="match status" value="1"/>
</dbReference>
<dbReference type="SUPFAM" id="SSF50729">
    <property type="entry name" value="PH domain-like"/>
    <property type="match status" value="2"/>
</dbReference>
<dbReference type="PROSITE" id="PS00741">
    <property type="entry name" value="DH_1"/>
    <property type="match status" value="1"/>
</dbReference>
<dbReference type="PROSITE" id="PS50010">
    <property type="entry name" value="DH_2"/>
    <property type="match status" value="1"/>
</dbReference>
<dbReference type="PROSITE" id="PS50106">
    <property type="entry name" value="PDZ"/>
    <property type="match status" value="1"/>
</dbReference>
<dbReference type="PROSITE" id="PS50003">
    <property type="entry name" value="PH_DOMAIN"/>
    <property type="match status" value="1"/>
</dbReference>
<dbReference type="PROSITE" id="PS50898">
    <property type="entry name" value="RBD"/>
    <property type="match status" value="1"/>
</dbReference>
<keyword id="KW-0002">3D-structure</keyword>
<keyword id="KW-0025">Alternative splicing</keyword>
<keyword id="KW-0966">Cell projection</keyword>
<keyword id="KW-0175">Coiled coil</keyword>
<keyword id="KW-0963">Cytoplasm</keyword>
<keyword id="KW-0344">Guanine-nucleotide releasing factor</keyword>
<keyword id="KW-0449">Lipoprotein</keyword>
<keyword id="KW-0519">Myristate</keyword>
<keyword id="KW-0597">Phosphoprotein</keyword>
<keyword id="KW-1185">Reference proteome</keyword>
<keyword id="KW-0677">Repeat</keyword>
<feature type="initiator methionine" description="Removed" evidence="1">
    <location>
        <position position="1"/>
    </location>
</feature>
<feature type="chain" id="PRO_0000317468" description="Rho guanine nucleotide exchange factor TIAM2">
    <location>
        <begin position="2"/>
        <end position="1715"/>
    </location>
</feature>
<feature type="domain" description="PH 1" evidence="4">
    <location>
        <begin position="504"/>
        <end position="618"/>
    </location>
</feature>
<feature type="domain" description="RBD" evidence="5">
    <location>
        <begin position="831"/>
        <end position="902"/>
    </location>
</feature>
<feature type="domain" description="PDZ" evidence="3">
    <location>
        <begin position="911"/>
        <end position="997"/>
    </location>
</feature>
<feature type="domain" description="DH" evidence="2">
    <location>
        <begin position="1120"/>
        <end position="1314"/>
    </location>
</feature>
<feature type="domain" description="PH 2" evidence="4">
    <location>
        <begin position="1347"/>
        <end position="1478"/>
    </location>
</feature>
<feature type="region of interest" description="Disordered" evidence="6">
    <location>
        <begin position="1"/>
        <end position="27"/>
    </location>
</feature>
<feature type="region of interest" description="Disordered" evidence="6">
    <location>
        <begin position="174"/>
        <end position="249"/>
    </location>
</feature>
<feature type="region of interest" description="Disordered" evidence="6">
    <location>
        <begin position="263"/>
        <end position="294"/>
    </location>
</feature>
<feature type="region of interest" description="Disordered" evidence="6">
    <location>
        <begin position="385"/>
        <end position="418"/>
    </location>
</feature>
<feature type="region of interest" description="Disordered" evidence="6">
    <location>
        <begin position="1092"/>
        <end position="1113"/>
    </location>
</feature>
<feature type="region of interest" description="Disordered" evidence="6">
    <location>
        <begin position="1515"/>
        <end position="1582"/>
    </location>
</feature>
<feature type="coiled-coil region" evidence="1">
    <location>
        <begin position="665"/>
        <end position="692"/>
    </location>
</feature>
<feature type="compositionally biased region" description="Polar residues" evidence="6">
    <location>
        <begin position="1"/>
        <end position="22"/>
    </location>
</feature>
<feature type="compositionally biased region" description="Polar residues" evidence="6">
    <location>
        <begin position="218"/>
        <end position="229"/>
    </location>
</feature>
<feature type="compositionally biased region" description="Low complexity" evidence="6">
    <location>
        <begin position="235"/>
        <end position="245"/>
    </location>
</feature>
<feature type="compositionally biased region" description="Basic and acidic residues" evidence="6">
    <location>
        <begin position="395"/>
        <end position="411"/>
    </location>
</feature>
<feature type="compositionally biased region" description="Low complexity" evidence="6">
    <location>
        <begin position="1522"/>
        <end position="1532"/>
    </location>
</feature>
<feature type="compositionally biased region" description="Polar residues" evidence="6">
    <location>
        <begin position="1533"/>
        <end position="1552"/>
    </location>
</feature>
<feature type="compositionally biased region" description="Basic and acidic residues" evidence="6">
    <location>
        <begin position="1557"/>
        <end position="1572"/>
    </location>
</feature>
<feature type="modified residue" description="Phosphoserine" evidence="22">
    <location>
        <position position="1604"/>
    </location>
</feature>
<feature type="modified residue" description="Phosphothreonine" evidence="13">
    <location>
        <position position="1662"/>
    </location>
</feature>
<feature type="lipid moiety-binding region" description="N-myristoyl glycine" evidence="1">
    <location>
        <position position="2"/>
    </location>
</feature>
<feature type="splice variant" id="VSP_030976" description="In isoform 3." evidence="18">
    <location>
        <begin position="1"/>
        <end position="1096"/>
    </location>
</feature>
<feature type="splice variant" id="VSP_030977" description="In isoform 2." evidence="17">
    <location>
        <position position="616"/>
    </location>
</feature>
<feature type="splice variant" id="VSP_030978" description="In isoform 4." evidence="18">
    <original>MFD</original>
    <variation>VSS</variation>
    <location>
        <begin position="786"/>
        <end position="788"/>
    </location>
</feature>
<feature type="splice variant" id="VSP_030979" description="In isoform 4." evidence="18">
    <location>
        <begin position="789"/>
        <end position="1715"/>
    </location>
</feature>
<feature type="mutagenesis site" description="No change of phosphorylation by Rho-kinase." evidence="13">
    <original>S</original>
    <variation>A</variation>
    <location>
        <position position="1655"/>
    </location>
</feature>
<feature type="mutagenesis site" description="No change of phosphorylation by Rho-kinase." evidence="13">
    <original>T</original>
    <variation>A</variation>
    <location>
        <position position="1656"/>
    </location>
</feature>
<feature type="mutagenesis site" description="Strongly decrease phosphorylation by Rho-kinase. No change in promoting neurite growth; when associated with A-1668 and A-1672." evidence="13">
    <original>T</original>
    <variation>A</variation>
    <location>
        <position position="1662"/>
    </location>
</feature>
<feature type="mutagenesis site" description="Slight decrease phosphorylation by Rho-kinase. No change in promoting neurite growth; when associated with A-1662 and A-1672." evidence="13">
    <original>T</original>
    <variation>A</variation>
    <location>
        <position position="1668"/>
    </location>
</feature>
<feature type="mutagenesis site" description="Slight decrease phosphorylation by Rho-kinase. No change in promoting neurite growth; when associated with A-1662 and A-1668." evidence="13">
    <original>S</original>
    <variation>A</variation>
    <location>
        <position position="1672"/>
    </location>
</feature>
<feature type="sequence conflict" description="In Ref. 3; BAE34377." evidence="19" ref="3">
    <original>G</original>
    <variation>D</variation>
    <location>
        <position position="45"/>
    </location>
</feature>
<feature type="sequence conflict" description="In Ref. 2; BAC98284." evidence="19" ref="2">
    <original>T</original>
    <variation>A</variation>
    <location>
        <position position="98"/>
    </location>
</feature>
<feature type="sequence conflict" description="In Ref. 2; BAC98284." evidence="19" ref="2">
    <original>E</original>
    <variation>D</variation>
    <location>
        <position position="261"/>
    </location>
</feature>
<feature type="sequence conflict" description="In Ref. 1; BAA81823." evidence="19" ref="1">
    <original>K</original>
    <variation>Q</variation>
    <location>
        <position position="803"/>
    </location>
</feature>
<feature type="sequence conflict" description="In Ref. 1; BAA81823." evidence="19" ref="1">
    <original>V</original>
    <variation>I</variation>
    <location>
        <position position="856"/>
    </location>
</feature>
<feature type="sequence conflict" description="In Ref. 1; BAA81823 and 2; BAC98284." evidence="19" ref="1 2">
    <original>V</original>
    <variation>A</variation>
    <location>
        <position position="860"/>
    </location>
</feature>
<feature type="sequence conflict" description="In Ref. 1; BAA81823." evidence="19" ref="1">
    <original>L</original>
    <variation>P</variation>
    <location>
        <position position="1077"/>
    </location>
</feature>
<feature type="sequence conflict" description="In Ref. 5; AAF28865." evidence="19" ref="5">
    <original>R</original>
    <variation>K</variation>
    <location>
        <position position="1234"/>
    </location>
</feature>
<feature type="sequence conflict" description="In Ref. 5; AAF28865." evidence="19" ref="5">
    <original>F</original>
    <variation>C</variation>
    <location>
        <position position="1248"/>
    </location>
</feature>
<feature type="sequence conflict" description="In Ref. 5; AAF28865." evidence="19" ref="5">
    <original>N</original>
    <variation>D</variation>
    <location>
        <position position="1397"/>
    </location>
</feature>
<feature type="sequence conflict" description="In Ref. 5; AAF28865." evidence="19" ref="5">
    <original>I</original>
    <variation>V</variation>
    <location>
        <position position="1446"/>
    </location>
</feature>
<feature type="sequence conflict" description="In Ref. 2; BAC98284." evidence="19" ref="2">
    <original>I</original>
    <variation>L</variation>
    <location>
        <position position="1611"/>
    </location>
</feature>
<feature type="strand" evidence="23">
    <location>
        <begin position="505"/>
        <end position="520"/>
    </location>
</feature>
<feature type="helix" evidence="23">
    <location>
        <begin position="521"/>
        <end position="523"/>
    </location>
</feature>
<feature type="strand" evidence="23">
    <location>
        <begin position="524"/>
        <end position="527"/>
    </location>
</feature>
<feature type="strand" evidence="23">
    <location>
        <begin position="534"/>
        <end position="541"/>
    </location>
</feature>
<feature type="strand" evidence="23">
    <location>
        <begin position="544"/>
        <end position="550"/>
    </location>
</feature>
<feature type="strand" evidence="23">
    <location>
        <begin position="563"/>
        <end position="567"/>
    </location>
</feature>
<feature type="strand" evidence="23">
    <location>
        <begin position="572"/>
        <end position="575"/>
    </location>
</feature>
<feature type="strand" evidence="23">
    <location>
        <begin position="583"/>
        <end position="589"/>
    </location>
</feature>
<feature type="strand" evidence="23">
    <location>
        <begin position="595"/>
        <end position="599"/>
    </location>
</feature>
<feature type="helix" evidence="23">
    <location>
        <begin position="603"/>
        <end position="624"/>
    </location>
</feature>
<feature type="helix" evidence="23">
    <location>
        <begin position="630"/>
        <end position="659"/>
    </location>
</feature>
<feature type="helix" evidence="23">
    <location>
        <begin position="665"/>
        <end position="700"/>
    </location>
</feature>
<feature type="helix" evidence="23">
    <location>
        <begin position="707"/>
        <end position="711"/>
    </location>
</feature>
<feature type="helix" evidence="23">
    <location>
        <begin position="716"/>
        <end position="725"/>
    </location>
</feature>
<feature type="helix" evidence="23">
    <location>
        <begin position="730"/>
        <end position="739"/>
    </location>
</feature>
<comment type="function">
    <text evidence="7 9 11 12 13">Modulates the activity of RHO-like proteins and connects extracellular signals to cytoskeletal activities. Acts as a GDP-dissociation stimulator protein that stimulates the GDP-GTP exchange activity of RHO-like GTPases and activates them. Activates specifically RAC1, but not CDC42 and RHOA. Mediates extracellular laminin signals to activate Rac1, contributing to neurite growth. Involved in lamellipodial formation and advancement of the growth cone of embryonic hippocampal neurons. Promotes migration of neurons in the cerebral cortex. When overexpressed, induces membrane ruffling accompanied by the accumulation of actin filaments along the altered plasma membrane.</text>
</comment>
<comment type="subunit">
    <text evidence="13 14">Interacts with MAP1A, MAP1B, PARP1 and YWHAE. Interacts with CD44, PARD3 and MAPK8IP2.</text>
</comment>
<comment type="interaction">
    <interactant intactId="EBI-7565978">
        <id>Q6ZPF3</id>
    </interactant>
    <interactant intactId="EBI-7565891">
        <id>P15379</id>
        <label>Cd44</label>
    </interactant>
    <organismsDiffer>false</organismsDiffer>
    <experiments>8</experiments>
</comment>
<comment type="interaction">
    <interactant intactId="EBI-7565978">
        <id>Q6ZPF3</id>
    </interactant>
    <interactant intactId="EBI-81968">
        <id>Q8TEW0</id>
        <label>PARD3</label>
    </interactant>
    <organismsDiffer>true</organismsDiffer>
    <experiments>2</experiments>
</comment>
<comment type="interaction">
    <interactant intactId="EBI-7565978">
        <id>Q6ZPF3</id>
    </interactant>
    <interactant intactId="EBI-9118204">
        <id>Q8TEW0-2</id>
        <label>PARD3</label>
    </interactant>
    <organismsDiffer>true</organismsDiffer>
    <experiments>6</experiments>
</comment>
<comment type="subcellular location">
    <subcellularLocation>
        <location evidence="12">Cytoplasm</location>
    </subcellularLocation>
    <subcellularLocation>
        <location evidence="12">Cell projection</location>
        <location evidence="12">Lamellipodium</location>
    </subcellularLocation>
    <subcellularLocation>
        <location evidence="12">Cell projection</location>
        <location evidence="12">Filopodium</location>
    </subcellularLocation>
    <subcellularLocation>
        <location evidence="9 12">Cell projection</location>
        <location evidence="9 12">Growth cone</location>
    </subcellularLocation>
    <subcellularLocation>
        <location evidence="9 12">Cell projection</location>
        <location evidence="9 12">Neuron projection</location>
    </subcellularLocation>
    <subcellularLocation>
        <location evidence="9">Perikaryon</location>
    </subcellularLocation>
</comment>
<comment type="alternative products">
    <event type="alternative splicing"/>
    <isoform>
        <id>Q6ZPF3-1</id>
        <name>1</name>
        <sequence type="displayed"/>
    </isoform>
    <isoform>
        <id>Q6ZPF3-2</id>
        <name>2</name>
        <sequence type="described" ref="VSP_030977"/>
    </isoform>
    <isoform>
        <id>Q6ZPF3-3</id>
        <name>3</name>
        <sequence type="described" ref="VSP_030976"/>
    </isoform>
    <isoform>
        <id>Q6ZPF3-4</id>
        <name>4</name>
        <sequence type="described" ref="VSP_030978 VSP_030979"/>
    </isoform>
</comment>
<comment type="tissue specificity">
    <text evidence="7 8 9 10 11 12">Expressed in fetal brain (at protein level). Expressed in the olfactory bulb, cortical plate of the cerebral cortex, caudate putamen, hippocampus, ependymal cells of the lateral surface of the lateral ventricles of the brain. Weakly expressed in heart, lung, liver, skeletal muscle, kidney and testis.</text>
</comment>
<comment type="developmental stage">
    <text evidence="7 8 9 10 11">Expressed in cerebral cortex, predominantly in the cortical plate and intermediate zone and weakly in the ventricular zone, in neurites and the growth cone of neurites of the hippocampus at 15 dpc (at protein level). Expressed in embryo at 7, 11, 15 and 17 dpc. Expressed in the preplate which consists of the Cajal-Retzius cells and the precursors of subplate neurons, in neurons of the telecephalon, in primordia of cerebral cortex and hippocampus at 12 dpc. Expressed in the cortical plate, striatum and fourth ventricle of the brain, in the cartilaginous tissues including Meckel, costal, vertebral and tracheal cartilage at 14.5 dpc. Expressed in cerebral cortex, hippocampus, olfactory bulbs, rostral migratory pathway and the striatum at 17 dpc.</text>
</comment>
<comment type="domain">
    <text>The PH 1 domain and amino acids 619-780 (a region called TSS; otherwise known as CC-Ex) are necessary for membrane localization. PH 1 and TSS domains are necessary for Rac1 activity. The PH 2 domain is engaged in the enhancement of the catalytic activity of the adjacent DH domain. The PH 1, TSS and DH domains are necessary to induce neurite-like structure.</text>
</comment>
<comment type="PTM">
    <text evidence="13">Phosphorylated on serine and threonine residues. Phosphorylated on Thr-1662 by Rho-kinase. Its phosphorylation by Rho-kinase inhibits its guanine nucleotide exchange activity, its interaction with MAP1A, MAP1B, PARP1 and YWHAE and reduces its ability to promote neurite growth.</text>
</comment>
<comment type="similarity">
    <text evidence="19">Belongs to the TIAM family.</text>
</comment>
<comment type="sequence caution" evidence="19">
    <conflict type="erroneous initiation">
        <sequence resource="EMBL-CDS" id="BAC98284"/>
    </conflict>
    <text>Extended N-terminus.</text>
</comment>
<accession>Q6ZPF3</accession>
<accession>Q3TSM6</accession>
<accession>Q3TZ33</accession>
<accession>Q6AXF2</accession>
<accession>Q6NXJ2</accession>
<accession>Q9JLY2</accession>
<accession>Q9WVS3</accession>
<proteinExistence type="evidence at protein level"/>
<reference key="1">
    <citation type="journal article" date="1999" name="J. Biol. Chem.">
        <title>Identification of the stef gene that encodes a novel guanine nucleotide exchange factor specific for Rac1.</title>
        <authorList>
            <person name="Hoshino M."/>
            <person name="Sone M."/>
            <person name="Fukata M."/>
            <person name="Kuroda S."/>
            <person name="Kaibuchi K."/>
            <person name="Nabeshima Y."/>
            <person name="Hama C."/>
        </authorList>
    </citation>
    <scope>NUCLEOTIDE SEQUENCE [MRNA] (ISOFORM 1)</scope>
    <scope>FUNCTION</scope>
    <scope>TISSUE SPECIFICITY</scope>
    <scope>DEVELOPMENTAL STAGE</scope>
    <source>
        <tissue>Brain</tissue>
    </source>
</reference>
<reference key="2">
    <citation type="journal article" date="2003" name="DNA Res.">
        <title>Prediction of the coding sequences of mouse homologues of KIAA gene: III. The complete nucleotide sequences of 500 mouse KIAA-homologous cDNAs identified by screening of terminal sequences of cDNA clones randomly sampled from size-fractionated libraries.</title>
        <authorList>
            <person name="Okazaki N."/>
            <person name="Kikuno R."/>
            <person name="Ohara R."/>
            <person name="Inamoto S."/>
            <person name="Koseki H."/>
            <person name="Hiraoka S."/>
            <person name="Saga Y."/>
            <person name="Nagase T."/>
            <person name="Ohara O."/>
            <person name="Koga H."/>
        </authorList>
    </citation>
    <scope>NUCLEOTIDE SEQUENCE [LARGE SCALE MRNA] (ISOFORM 1)</scope>
    <source>
        <tissue>Brain</tissue>
    </source>
</reference>
<reference key="3">
    <citation type="journal article" date="2005" name="Science">
        <title>The transcriptional landscape of the mammalian genome.</title>
        <authorList>
            <person name="Carninci P."/>
            <person name="Kasukawa T."/>
            <person name="Katayama S."/>
            <person name="Gough J."/>
            <person name="Frith M.C."/>
            <person name="Maeda N."/>
            <person name="Oyama R."/>
            <person name="Ravasi T."/>
            <person name="Lenhard B."/>
            <person name="Wells C."/>
            <person name="Kodzius R."/>
            <person name="Shimokawa K."/>
            <person name="Bajic V.B."/>
            <person name="Brenner S.E."/>
            <person name="Batalov S."/>
            <person name="Forrest A.R."/>
            <person name="Zavolan M."/>
            <person name="Davis M.J."/>
            <person name="Wilming L.G."/>
            <person name="Aidinis V."/>
            <person name="Allen J.E."/>
            <person name="Ambesi-Impiombato A."/>
            <person name="Apweiler R."/>
            <person name="Aturaliya R.N."/>
            <person name="Bailey T.L."/>
            <person name="Bansal M."/>
            <person name="Baxter L."/>
            <person name="Beisel K.W."/>
            <person name="Bersano T."/>
            <person name="Bono H."/>
            <person name="Chalk A.M."/>
            <person name="Chiu K.P."/>
            <person name="Choudhary V."/>
            <person name="Christoffels A."/>
            <person name="Clutterbuck D.R."/>
            <person name="Crowe M.L."/>
            <person name="Dalla E."/>
            <person name="Dalrymple B.P."/>
            <person name="de Bono B."/>
            <person name="Della Gatta G."/>
            <person name="di Bernardo D."/>
            <person name="Down T."/>
            <person name="Engstrom P."/>
            <person name="Fagiolini M."/>
            <person name="Faulkner G."/>
            <person name="Fletcher C.F."/>
            <person name="Fukushima T."/>
            <person name="Furuno M."/>
            <person name="Futaki S."/>
            <person name="Gariboldi M."/>
            <person name="Georgii-Hemming P."/>
            <person name="Gingeras T.R."/>
            <person name="Gojobori T."/>
            <person name="Green R.E."/>
            <person name="Gustincich S."/>
            <person name="Harbers M."/>
            <person name="Hayashi Y."/>
            <person name="Hensch T.K."/>
            <person name="Hirokawa N."/>
            <person name="Hill D."/>
            <person name="Huminiecki L."/>
            <person name="Iacono M."/>
            <person name="Ikeo K."/>
            <person name="Iwama A."/>
            <person name="Ishikawa T."/>
            <person name="Jakt M."/>
            <person name="Kanapin A."/>
            <person name="Katoh M."/>
            <person name="Kawasawa Y."/>
            <person name="Kelso J."/>
            <person name="Kitamura H."/>
            <person name="Kitano H."/>
            <person name="Kollias G."/>
            <person name="Krishnan S.P."/>
            <person name="Kruger A."/>
            <person name="Kummerfeld S.K."/>
            <person name="Kurochkin I.V."/>
            <person name="Lareau L.F."/>
            <person name="Lazarevic D."/>
            <person name="Lipovich L."/>
            <person name="Liu J."/>
            <person name="Liuni S."/>
            <person name="McWilliam S."/>
            <person name="Madan Babu M."/>
            <person name="Madera M."/>
            <person name="Marchionni L."/>
            <person name="Matsuda H."/>
            <person name="Matsuzawa S."/>
            <person name="Miki H."/>
            <person name="Mignone F."/>
            <person name="Miyake S."/>
            <person name="Morris K."/>
            <person name="Mottagui-Tabar S."/>
            <person name="Mulder N."/>
            <person name="Nakano N."/>
            <person name="Nakauchi H."/>
            <person name="Ng P."/>
            <person name="Nilsson R."/>
            <person name="Nishiguchi S."/>
            <person name="Nishikawa S."/>
            <person name="Nori F."/>
            <person name="Ohara O."/>
            <person name="Okazaki Y."/>
            <person name="Orlando V."/>
            <person name="Pang K.C."/>
            <person name="Pavan W.J."/>
            <person name="Pavesi G."/>
            <person name="Pesole G."/>
            <person name="Petrovsky N."/>
            <person name="Piazza S."/>
            <person name="Reed J."/>
            <person name="Reid J.F."/>
            <person name="Ring B.Z."/>
            <person name="Ringwald M."/>
            <person name="Rost B."/>
            <person name="Ruan Y."/>
            <person name="Salzberg S.L."/>
            <person name="Sandelin A."/>
            <person name="Schneider C."/>
            <person name="Schoenbach C."/>
            <person name="Sekiguchi K."/>
            <person name="Semple C.A."/>
            <person name="Seno S."/>
            <person name="Sessa L."/>
            <person name="Sheng Y."/>
            <person name="Shibata Y."/>
            <person name="Shimada H."/>
            <person name="Shimada K."/>
            <person name="Silva D."/>
            <person name="Sinclair B."/>
            <person name="Sperling S."/>
            <person name="Stupka E."/>
            <person name="Sugiura K."/>
            <person name="Sultana R."/>
            <person name="Takenaka Y."/>
            <person name="Taki K."/>
            <person name="Tammoja K."/>
            <person name="Tan S.L."/>
            <person name="Tang S."/>
            <person name="Taylor M.S."/>
            <person name="Tegner J."/>
            <person name="Teichmann S.A."/>
            <person name="Ueda H.R."/>
            <person name="van Nimwegen E."/>
            <person name="Verardo R."/>
            <person name="Wei C.L."/>
            <person name="Yagi K."/>
            <person name="Yamanishi H."/>
            <person name="Zabarovsky E."/>
            <person name="Zhu S."/>
            <person name="Zimmer A."/>
            <person name="Hide W."/>
            <person name="Bult C."/>
            <person name="Grimmond S.M."/>
            <person name="Teasdale R.D."/>
            <person name="Liu E.T."/>
            <person name="Brusic V."/>
            <person name="Quackenbush J."/>
            <person name="Wahlestedt C."/>
            <person name="Mattick J.S."/>
            <person name="Hume D.A."/>
            <person name="Kai C."/>
            <person name="Sasaki D."/>
            <person name="Tomaru Y."/>
            <person name="Fukuda S."/>
            <person name="Kanamori-Katayama M."/>
            <person name="Suzuki M."/>
            <person name="Aoki J."/>
            <person name="Arakawa T."/>
            <person name="Iida J."/>
            <person name="Imamura K."/>
            <person name="Itoh M."/>
            <person name="Kato T."/>
            <person name="Kawaji H."/>
            <person name="Kawagashira N."/>
            <person name="Kawashima T."/>
            <person name="Kojima M."/>
            <person name="Kondo S."/>
            <person name="Konno H."/>
            <person name="Nakano K."/>
            <person name="Ninomiya N."/>
            <person name="Nishio T."/>
            <person name="Okada M."/>
            <person name="Plessy C."/>
            <person name="Shibata K."/>
            <person name="Shiraki T."/>
            <person name="Suzuki S."/>
            <person name="Tagami M."/>
            <person name="Waki K."/>
            <person name="Watahiki A."/>
            <person name="Okamura-Oho Y."/>
            <person name="Suzuki H."/>
            <person name="Kawai J."/>
            <person name="Hayashizaki Y."/>
        </authorList>
    </citation>
    <scope>NUCLEOTIDE SEQUENCE [LARGE SCALE MRNA] (ISOFORMS 3 AND 4)</scope>
    <source>
        <strain>C57BL/6J</strain>
        <tissue>Inner ear</tissue>
        <tissue>Olfactory bulb</tissue>
    </source>
</reference>
<reference key="4">
    <citation type="journal article" date="2004" name="Genome Res.">
        <title>The status, quality, and expansion of the NIH full-length cDNA project: the Mammalian Gene Collection (MGC).</title>
        <authorList>
            <consortium name="The MGC Project Team"/>
        </authorList>
    </citation>
    <scope>NUCLEOTIDE SEQUENCE [LARGE SCALE MRNA] (ISOFORMS 1 AND 2)</scope>
    <source>
        <strain>C57BL/6J</strain>
        <tissue>Brain</tissue>
    </source>
</reference>
<reference key="5">
    <citation type="journal article" date="1999" name="Genomics">
        <title>Cloning and characterization of T-cell lymphoma invasion and metastasis 2 (TIAM2), a novel guanine nucleotide exchange factor related to TIAM1.</title>
        <authorList>
            <person name="Chiu C.-Y."/>
            <person name="Leng S."/>
            <person name="Martin K.A."/>
            <person name="Kim E."/>
            <person name="Gorman S."/>
            <person name="Duhl D.M."/>
        </authorList>
    </citation>
    <scope>NUCLEOTIDE SEQUENCE [MRNA] OF 1232-1498</scope>
    <scope>DEVELOPMENTAL STAGE</scope>
    <scope>TISSUE SPECIFICITY</scope>
</reference>
<reference key="6">
    <citation type="journal article" date="2002" name="J. Biol. Chem.">
        <title>Characterization of STEF, a guanine nucleotide exchange factor for Rac1, required for neurite growth.</title>
        <authorList>
            <person name="Matsuo N."/>
            <person name="Hoshino M."/>
            <person name="Yoshizawa M."/>
            <person name="Nabeshima Y."/>
        </authorList>
    </citation>
    <scope>FUNCTION</scope>
    <scope>SUBCELLULAR LOCATION</scope>
    <scope>TISSUE SPECIFICITY</scope>
    <scope>DEVELOPMENTAL STAGE</scope>
</reference>
<reference key="7">
    <citation type="journal article" date="2002" name="Mech. Dev.">
        <title>Expression of stef, an activator of Rac1, correlates with the stages of neuronal morphological development in the mouse brain.</title>
        <authorList>
            <person name="Yoshizawa M."/>
            <person name="Hoshino M."/>
            <person name="Sone M."/>
            <person name="Nabeshima Y."/>
        </authorList>
    </citation>
    <scope>TISSUE SPECIFICITY</scope>
    <scope>DEVELOPMENTAL STAGE</scope>
</reference>
<reference key="8">
    <citation type="journal article" date="2003" name="EMBO J.">
        <title>The in vivo roles of STEF/Tiam1, Rac1 and JNK in cortical neuronal migration.</title>
        <authorList>
            <person name="Kawauchi T."/>
            <person name="Chihama K."/>
            <person name="Nabeshima Y."/>
            <person name="Hoshino M."/>
        </authorList>
    </citation>
    <scope>FUNCTION</scope>
    <scope>DEVELOPMENTAL STAGE</scope>
    <scope>TISSUE SPECIFICITY</scope>
</reference>
<reference key="9">
    <citation type="journal article" date="2003" name="Mol. Cell. Neurosci.">
        <title>Roles of STEF/Tiam1, guanine nucleotide exchange factors for Rac1, in regulation of growth cone morphology.</title>
        <authorList>
            <person name="Matsuo N."/>
            <person name="Terao M."/>
            <person name="Nabeshima Y."/>
            <person name="Hoshino M."/>
        </authorList>
    </citation>
    <scope>FUNCTION</scope>
    <scope>SUBCELLULAR LOCATION</scope>
    <scope>TISSUE SPECIFICITY</scope>
</reference>
<reference key="10">
    <citation type="journal article" date="2007" name="Biochem. Biophys. Res. Commun.">
        <title>Rho-kinase modulates the function of STEF, a Rac GEF, through its phosphorylation.</title>
        <authorList>
            <person name="Takefuji M."/>
            <person name="Mori K."/>
            <person name="Morita Y."/>
            <person name="Arimura N."/>
            <person name="Nishimura T."/>
            <person name="Nakayama M."/>
            <person name="Hoshino M."/>
            <person name="Iwamatsu A."/>
            <person name="Murohara T."/>
            <person name="Kaibuchi K."/>
            <person name="Amano M."/>
        </authorList>
    </citation>
    <scope>FUNCTION</scope>
    <scope>INTERACTION WITH MAP1A; MAP1B; PARP1 AND YWHAE</scope>
    <scope>PHOSPHORYLATION AT THR-1662</scope>
    <scope>MUTAGENESIS OF SER-1655; THR-1656; THR-1662; THR-1668 AND SER-1672</scope>
</reference>
<reference key="11">
    <citation type="journal article" date="2010" name="Cell">
        <title>A tissue-specific atlas of mouse protein phosphorylation and expression.</title>
        <authorList>
            <person name="Huttlin E.L."/>
            <person name="Jedrychowski M.P."/>
            <person name="Elias J.E."/>
            <person name="Goswami T."/>
            <person name="Rad R."/>
            <person name="Beausoleil S.A."/>
            <person name="Villen J."/>
            <person name="Haas W."/>
            <person name="Sowa M.E."/>
            <person name="Gygi S.P."/>
        </authorList>
    </citation>
    <scope>PHOSPHORYLATION [LARGE SCALE ANALYSIS] AT SER-1604</scope>
    <scope>IDENTIFICATION BY MASS SPECTROMETRY [LARGE SCALE ANALYSIS]</scope>
    <source>
        <tissue>Brain</tissue>
    </source>
</reference>
<reference key="12">
    <citation type="journal article" date="2010" name="EMBO J.">
        <title>The PHCCEx domain of Tiam1/2 is a novel protein- and membrane-binding module.</title>
        <authorList>
            <person name="Terawaki S."/>
            <person name="Kitano K."/>
            <person name="Mori T."/>
            <person name="Zhai Y."/>
            <person name="Higuchi Y."/>
            <person name="Itoh N."/>
            <person name="Watanabe T."/>
            <person name="Kaibuchi K."/>
            <person name="Hakoshima T."/>
        </authorList>
    </citation>
    <scope>X-RAY CRYSTALLOGRAPHY (2.1 ANGSTROMS) OF 500-757</scope>
    <scope>INTERACTION WITH CD44; PARD3 AND MAPK8IP2</scope>
</reference>